<dbReference type="EMBL" id="L47709">
    <property type="protein sequence ID" value="AAB38438.1"/>
    <property type="molecule type" value="Genomic_DNA"/>
</dbReference>
<dbReference type="EMBL" id="AL009126">
    <property type="protein sequence ID" value="CAB14169.1"/>
    <property type="molecule type" value="Genomic_DNA"/>
</dbReference>
<dbReference type="PIR" id="A69937">
    <property type="entry name" value="A69937"/>
</dbReference>
<dbReference type="RefSeq" id="NP_390134.1">
    <property type="nucleotide sequence ID" value="NC_000964.3"/>
</dbReference>
<dbReference type="RefSeq" id="WP_010886552.1">
    <property type="nucleotide sequence ID" value="NC_000964.3"/>
</dbReference>
<dbReference type="SMR" id="P54392"/>
<dbReference type="FunCoup" id="P54392">
    <property type="interactions" value="7"/>
</dbReference>
<dbReference type="STRING" id="224308.BSU22530"/>
<dbReference type="PaxDb" id="224308-BSU22530"/>
<dbReference type="EnsemblBacteria" id="CAB14169">
    <property type="protein sequence ID" value="CAB14169"/>
    <property type="gene ID" value="BSU_22530"/>
</dbReference>
<dbReference type="GeneID" id="939018"/>
<dbReference type="KEGG" id="bsu:BSU22530"/>
<dbReference type="PATRIC" id="fig|224308.43.peg.2348"/>
<dbReference type="eggNOG" id="COG4347">
    <property type="taxonomic scope" value="Bacteria"/>
</dbReference>
<dbReference type="InParanoid" id="P54392"/>
<dbReference type="OrthoDB" id="152213at2"/>
<dbReference type="PhylomeDB" id="P54392"/>
<dbReference type="BioCyc" id="BSUB:BSU22530-MONOMER"/>
<dbReference type="Proteomes" id="UP000001570">
    <property type="component" value="Chromosome"/>
</dbReference>
<dbReference type="GO" id="GO:0005886">
    <property type="term" value="C:plasma membrane"/>
    <property type="evidence" value="ECO:0007669"/>
    <property type="project" value="UniProtKB-SubCell"/>
</dbReference>
<dbReference type="InterPro" id="IPR009845">
    <property type="entry name" value="DUF1405"/>
</dbReference>
<dbReference type="PANTHER" id="PTHR40042:SF1">
    <property type="entry name" value="DUF1405 DOMAIN-CONTAINING PROTEIN"/>
    <property type="match status" value="1"/>
</dbReference>
<dbReference type="PANTHER" id="PTHR40042">
    <property type="entry name" value="HYPOTHETICAL MEMBRANE SPANNING PROTEIN"/>
    <property type="match status" value="1"/>
</dbReference>
<dbReference type="Pfam" id="PF07187">
    <property type="entry name" value="DUF1405"/>
    <property type="match status" value="1"/>
</dbReference>
<comment type="subcellular location">
    <subcellularLocation>
        <location evidence="2">Cell membrane</location>
        <topology evidence="2">Multi-pass membrane protein</topology>
    </subcellularLocation>
</comment>
<accession>P54392</accession>
<proteinExistence type="predicted"/>
<gene>
    <name type="primary">ypjA</name>
    <name type="ordered locus">BSU22530</name>
</gene>
<feature type="chain" id="PRO_0000049702" description="Uncharacterized protein YpjA">
    <location>
        <begin position="1"/>
        <end position="185"/>
    </location>
</feature>
<feature type="transmembrane region" description="Helical" evidence="1">
    <location>
        <begin position="32"/>
        <end position="52"/>
    </location>
</feature>
<feature type="transmembrane region" description="Helical" evidence="1">
    <location>
        <begin position="66"/>
        <end position="86"/>
    </location>
</feature>
<feature type="transmembrane region" description="Helical" evidence="1">
    <location>
        <begin position="155"/>
        <end position="175"/>
    </location>
</feature>
<sequence length="185" mass="21330">MLILVLAINFLGTVYGYYWYLPQLLETPARFLIFVPDSPTATFFFLFVLLAFLMKRNAPLLEALALVTLVKYGLWAVAMNFLVLAVTGDLPWEGYMLIASHFAMAVQGVLYSPYFRFSFWHLAIAAVWTLHNDVIDYLFDMMPQYSMLSDYMTEIGYGTFWLSIFSIALAYFLVVSKKQTKLELM</sequence>
<reference key="1">
    <citation type="journal article" date="1996" name="Microbiology">
        <title>Sequence analysis of the Bacillus subtilis chromosome region between the serA and kdg loci cloned in a yeast artificial chromosome.</title>
        <authorList>
            <person name="Sorokin A.V."/>
            <person name="Azevedo V."/>
            <person name="Zumstein E."/>
            <person name="Galleron N."/>
            <person name="Ehrlich S.D."/>
            <person name="Serror P."/>
        </authorList>
    </citation>
    <scope>NUCLEOTIDE SEQUENCE [GENOMIC DNA]</scope>
    <source>
        <strain>168 / Marburg / ATCC 6051 / DSM 10 / JCM 1465 / NBRC 13719 / NCIMB 3610 / NRRL NRS-744 / VKM B-501</strain>
    </source>
</reference>
<reference key="2">
    <citation type="journal article" date="1997" name="Nature">
        <title>The complete genome sequence of the Gram-positive bacterium Bacillus subtilis.</title>
        <authorList>
            <person name="Kunst F."/>
            <person name="Ogasawara N."/>
            <person name="Moszer I."/>
            <person name="Albertini A.M."/>
            <person name="Alloni G."/>
            <person name="Azevedo V."/>
            <person name="Bertero M.G."/>
            <person name="Bessieres P."/>
            <person name="Bolotin A."/>
            <person name="Borchert S."/>
            <person name="Borriss R."/>
            <person name="Boursier L."/>
            <person name="Brans A."/>
            <person name="Braun M."/>
            <person name="Brignell S.C."/>
            <person name="Bron S."/>
            <person name="Brouillet S."/>
            <person name="Bruschi C.V."/>
            <person name="Caldwell B."/>
            <person name="Capuano V."/>
            <person name="Carter N.M."/>
            <person name="Choi S.-K."/>
            <person name="Codani J.-J."/>
            <person name="Connerton I.F."/>
            <person name="Cummings N.J."/>
            <person name="Daniel R.A."/>
            <person name="Denizot F."/>
            <person name="Devine K.M."/>
            <person name="Duesterhoeft A."/>
            <person name="Ehrlich S.D."/>
            <person name="Emmerson P.T."/>
            <person name="Entian K.-D."/>
            <person name="Errington J."/>
            <person name="Fabret C."/>
            <person name="Ferrari E."/>
            <person name="Foulger D."/>
            <person name="Fritz C."/>
            <person name="Fujita M."/>
            <person name="Fujita Y."/>
            <person name="Fuma S."/>
            <person name="Galizzi A."/>
            <person name="Galleron N."/>
            <person name="Ghim S.-Y."/>
            <person name="Glaser P."/>
            <person name="Goffeau A."/>
            <person name="Golightly E.J."/>
            <person name="Grandi G."/>
            <person name="Guiseppi G."/>
            <person name="Guy B.J."/>
            <person name="Haga K."/>
            <person name="Haiech J."/>
            <person name="Harwood C.R."/>
            <person name="Henaut A."/>
            <person name="Hilbert H."/>
            <person name="Holsappel S."/>
            <person name="Hosono S."/>
            <person name="Hullo M.-F."/>
            <person name="Itaya M."/>
            <person name="Jones L.-M."/>
            <person name="Joris B."/>
            <person name="Karamata D."/>
            <person name="Kasahara Y."/>
            <person name="Klaerr-Blanchard M."/>
            <person name="Klein C."/>
            <person name="Kobayashi Y."/>
            <person name="Koetter P."/>
            <person name="Koningstein G."/>
            <person name="Krogh S."/>
            <person name="Kumano M."/>
            <person name="Kurita K."/>
            <person name="Lapidus A."/>
            <person name="Lardinois S."/>
            <person name="Lauber J."/>
            <person name="Lazarevic V."/>
            <person name="Lee S.-M."/>
            <person name="Levine A."/>
            <person name="Liu H."/>
            <person name="Masuda S."/>
            <person name="Mauel C."/>
            <person name="Medigue C."/>
            <person name="Medina N."/>
            <person name="Mellado R.P."/>
            <person name="Mizuno M."/>
            <person name="Moestl D."/>
            <person name="Nakai S."/>
            <person name="Noback M."/>
            <person name="Noone D."/>
            <person name="O'Reilly M."/>
            <person name="Ogawa K."/>
            <person name="Ogiwara A."/>
            <person name="Oudega B."/>
            <person name="Park S.-H."/>
            <person name="Parro V."/>
            <person name="Pohl T.M."/>
            <person name="Portetelle D."/>
            <person name="Porwollik S."/>
            <person name="Prescott A.M."/>
            <person name="Presecan E."/>
            <person name="Pujic P."/>
            <person name="Purnelle B."/>
            <person name="Rapoport G."/>
            <person name="Rey M."/>
            <person name="Reynolds S."/>
            <person name="Rieger M."/>
            <person name="Rivolta C."/>
            <person name="Rocha E."/>
            <person name="Roche B."/>
            <person name="Rose M."/>
            <person name="Sadaie Y."/>
            <person name="Sato T."/>
            <person name="Scanlan E."/>
            <person name="Schleich S."/>
            <person name="Schroeter R."/>
            <person name="Scoffone F."/>
            <person name="Sekiguchi J."/>
            <person name="Sekowska A."/>
            <person name="Seror S.J."/>
            <person name="Serror P."/>
            <person name="Shin B.-S."/>
            <person name="Soldo B."/>
            <person name="Sorokin A."/>
            <person name="Tacconi E."/>
            <person name="Takagi T."/>
            <person name="Takahashi H."/>
            <person name="Takemaru K."/>
            <person name="Takeuchi M."/>
            <person name="Tamakoshi A."/>
            <person name="Tanaka T."/>
            <person name="Terpstra P."/>
            <person name="Tognoni A."/>
            <person name="Tosato V."/>
            <person name="Uchiyama S."/>
            <person name="Vandenbol M."/>
            <person name="Vannier F."/>
            <person name="Vassarotti A."/>
            <person name="Viari A."/>
            <person name="Wambutt R."/>
            <person name="Wedler E."/>
            <person name="Wedler H."/>
            <person name="Weitzenegger T."/>
            <person name="Winters P."/>
            <person name="Wipat A."/>
            <person name="Yamamoto H."/>
            <person name="Yamane K."/>
            <person name="Yasumoto K."/>
            <person name="Yata K."/>
            <person name="Yoshida K."/>
            <person name="Yoshikawa H.-F."/>
            <person name="Zumstein E."/>
            <person name="Yoshikawa H."/>
            <person name="Danchin A."/>
        </authorList>
    </citation>
    <scope>NUCLEOTIDE SEQUENCE [LARGE SCALE GENOMIC DNA]</scope>
    <source>
        <strain>168</strain>
    </source>
</reference>
<protein>
    <recommendedName>
        <fullName>Uncharacterized protein YpjA</fullName>
    </recommendedName>
</protein>
<organism>
    <name type="scientific">Bacillus subtilis (strain 168)</name>
    <dbReference type="NCBI Taxonomy" id="224308"/>
    <lineage>
        <taxon>Bacteria</taxon>
        <taxon>Bacillati</taxon>
        <taxon>Bacillota</taxon>
        <taxon>Bacilli</taxon>
        <taxon>Bacillales</taxon>
        <taxon>Bacillaceae</taxon>
        <taxon>Bacillus</taxon>
    </lineage>
</organism>
<keyword id="KW-1003">Cell membrane</keyword>
<keyword id="KW-0472">Membrane</keyword>
<keyword id="KW-1185">Reference proteome</keyword>
<keyword id="KW-0812">Transmembrane</keyword>
<keyword id="KW-1133">Transmembrane helix</keyword>
<evidence type="ECO:0000255" key="1"/>
<evidence type="ECO:0000305" key="2"/>
<name>YPJA_BACSU</name>